<organism>
    <name type="scientific">Shewanella baltica (strain OS195)</name>
    <dbReference type="NCBI Taxonomy" id="399599"/>
    <lineage>
        <taxon>Bacteria</taxon>
        <taxon>Pseudomonadati</taxon>
        <taxon>Pseudomonadota</taxon>
        <taxon>Gammaproteobacteria</taxon>
        <taxon>Alteromonadales</taxon>
        <taxon>Shewanellaceae</taxon>
        <taxon>Shewanella</taxon>
    </lineage>
</organism>
<evidence type="ECO:0000250" key="1"/>
<evidence type="ECO:0000255" key="2">
    <source>
        <dbReference type="HAMAP-Rule" id="MF_00492"/>
    </source>
</evidence>
<gene>
    <name evidence="2" type="primary">tal</name>
    <name type="ordered locus">Sbal195_1145</name>
</gene>
<feature type="chain" id="PRO_1000081398" description="Transaldolase">
    <location>
        <begin position="1"/>
        <end position="318"/>
    </location>
</feature>
<feature type="active site" description="Schiff-base intermediate with substrate" evidence="2">
    <location>
        <position position="132"/>
    </location>
</feature>
<comment type="function">
    <text evidence="2">Transaldolase is important for the balance of metabolites in the pentose-phosphate pathway.</text>
</comment>
<comment type="catalytic activity">
    <reaction evidence="2">
        <text>D-sedoheptulose 7-phosphate + D-glyceraldehyde 3-phosphate = D-erythrose 4-phosphate + beta-D-fructose 6-phosphate</text>
        <dbReference type="Rhea" id="RHEA:17053"/>
        <dbReference type="ChEBI" id="CHEBI:16897"/>
        <dbReference type="ChEBI" id="CHEBI:57483"/>
        <dbReference type="ChEBI" id="CHEBI:57634"/>
        <dbReference type="ChEBI" id="CHEBI:59776"/>
        <dbReference type="EC" id="2.2.1.2"/>
    </reaction>
</comment>
<comment type="pathway">
    <text evidence="2">Carbohydrate degradation; pentose phosphate pathway; D-glyceraldehyde 3-phosphate and beta-D-fructose 6-phosphate from D-ribose 5-phosphate and D-xylulose 5-phosphate (non-oxidative stage): step 2/3.</text>
</comment>
<comment type="subunit">
    <text evidence="1">Homodimer.</text>
</comment>
<comment type="subcellular location">
    <subcellularLocation>
        <location evidence="2">Cytoplasm</location>
    </subcellularLocation>
</comment>
<comment type="similarity">
    <text evidence="2">Belongs to the transaldolase family. Type 1 subfamily.</text>
</comment>
<proteinExistence type="inferred from homology"/>
<keyword id="KW-0963">Cytoplasm</keyword>
<keyword id="KW-0570">Pentose shunt</keyword>
<keyword id="KW-0704">Schiff base</keyword>
<keyword id="KW-0808">Transferase</keyword>
<sequence>MANTLEQLKLYTTIVADTGDIEAIKRYQPEDATTNPSLILKAAQIPEYESLIDNAIDWAKSQSDDLAQQLDDASDKLAVNIGVEILKLVPGRISTEVDARLSFDKEQSIAKAHKLVRLYKEAGVDKSRILIKLASTWEGICAARELEKEGINCNLTLLFSFAQARACAEAGAYLISPFVGRILDWYKKDTGKDYDAVNDPGVISVTEIYNYYKQHGFNTVVMGASFRNIGEIIELAGCDRLTIGPSLLEELANSQVDITPKLVAATSTVAAEAPLTEAQFRWDFNQDPMAVDKLAEGIRNFAIDQGKLEVMLTAKLAN</sequence>
<reference key="1">
    <citation type="submission" date="2007-11" db="EMBL/GenBank/DDBJ databases">
        <title>Complete sequence of chromosome of Shewanella baltica OS195.</title>
        <authorList>
            <consortium name="US DOE Joint Genome Institute"/>
            <person name="Copeland A."/>
            <person name="Lucas S."/>
            <person name="Lapidus A."/>
            <person name="Barry K."/>
            <person name="Glavina del Rio T."/>
            <person name="Dalin E."/>
            <person name="Tice H."/>
            <person name="Pitluck S."/>
            <person name="Chain P."/>
            <person name="Malfatti S."/>
            <person name="Shin M."/>
            <person name="Vergez L."/>
            <person name="Schmutz J."/>
            <person name="Larimer F."/>
            <person name="Land M."/>
            <person name="Hauser L."/>
            <person name="Kyrpides N."/>
            <person name="Kim E."/>
            <person name="Brettar I."/>
            <person name="Rodrigues J."/>
            <person name="Konstantinidis K."/>
            <person name="Klappenbach J."/>
            <person name="Hofle M."/>
            <person name="Tiedje J."/>
            <person name="Richardson P."/>
        </authorList>
    </citation>
    <scope>NUCLEOTIDE SEQUENCE [LARGE SCALE GENOMIC DNA]</scope>
    <source>
        <strain>OS195</strain>
    </source>
</reference>
<name>TAL_SHEB9</name>
<dbReference type="EC" id="2.2.1.2" evidence="2"/>
<dbReference type="EMBL" id="CP000891">
    <property type="protein sequence ID" value="ABX48321.1"/>
    <property type="molecule type" value="Genomic_DNA"/>
</dbReference>
<dbReference type="RefSeq" id="WP_006084969.1">
    <property type="nucleotide sequence ID" value="NC_009997.1"/>
</dbReference>
<dbReference type="SMR" id="A9L4T6"/>
<dbReference type="GeneID" id="11774630"/>
<dbReference type="KEGG" id="sbn:Sbal195_1145"/>
<dbReference type="HOGENOM" id="CLU_047470_0_1_6"/>
<dbReference type="UniPathway" id="UPA00115">
    <property type="reaction ID" value="UER00414"/>
</dbReference>
<dbReference type="Proteomes" id="UP000000770">
    <property type="component" value="Chromosome"/>
</dbReference>
<dbReference type="GO" id="GO:0005829">
    <property type="term" value="C:cytosol"/>
    <property type="evidence" value="ECO:0007669"/>
    <property type="project" value="TreeGrafter"/>
</dbReference>
<dbReference type="GO" id="GO:0004801">
    <property type="term" value="F:transaldolase activity"/>
    <property type="evidence" value="ECO:0000250"/>
    <property type="project" value="UniProtKB"/>
</dbReference>
<dbReference type="GO" id="GO:0005975">
    <property type="term" value="P:carbohydrate metabolic process"/>
    <property type="evidence" value="ECO:0007669"/>
    <property type="project" value="InterPro"/>
</dbReference>
<dbReference type="GO" id="GO:0006098">
    <property type="term" value="P:pentose-phosphate shunt"/>
    <property type="evidence" value="ECO:0007669"/>
    <property type="project" value="UniProtKB-UniRule"/>
</dbReference>
<dbReference type="CDD" id="cd00957">
    <property type="entry name" value="Transaldolase_TalAB"/>
    <property type="match status" value="1"/>
</dbReference>
<dbReference type="FunFam" id="3.20.20.70:FF:000002">
    <property type="entry name" value="Transaldolase"/>
    <property type="match status" value="1"/>
</dbReference>
<dbReference type="Gene3D" id="3.20.20.70">
    <property type="entry name" value="Aldolase class I"/>
    <property type="match status" value="1"/>
</dbReference>
<dbReference type="HAMAP" id="MF_00492">
    <property type="entry name" value="Transaldolase_1"/>
    <property type="match status" value="1"/>
</dbReference>
<dbReference type="InterPro" id="IPR013785">
    <property type="entry name" value="Aldolase_TIM"/>
</dbReference>
<dbReference type="InterPro" id="IPR001585">
    <property type="entry name" value="TAL/FSA"/>
</dbReference>
<dbReference type="InterPro" id="IPR004730">
    <property type="entry name" value="Transaldolase_1"/>
</dbReference>
<dbReference type="InterPro" id="IPR018225">
    <property type="entry name" value="Transaldolase_AS"/>
</dbReference>
<dbReference type="NCBIfam" id="NF009001">
    <property type="entry name" value="PRK12346.1"/>
    <property type="match status" value="1"/>
</dbReference>
<dbReference type="NCBIfam" id="TIGR00874">
    <property type="entry name" value="talAB"/>
    <property type="match status" value="1"/>
</dbReference>
<dbReference type="PANTHER" id="PTHR10683">
    <property type="entry name" value="TRANSALDOLASE"/>
    <property type="match status" value="1"/>
</dbReference>
<dbReference type="PANTHER" id="PTHR10683:SF18">
    <property type="entry name" value="TRANSALDOLASE"/>
    <property type="match status" value="1"/>
</dbReference>
<dbReference type="Pfam" id="PF00923">
    <property type="entry name" value="TAL_FSA"/>
    <property type="match status" value="1"/>
</dbReference>
<dbReference type="SUPFAM" id="SSF51569">
    <property type="entry name" value="Aldolase"/>
    <property type="match status" value="1"/>
</dbReference>
<dbReference type="PROSITE" id="PS01054">
    <property type="entry name" value="TRANSALDOLASE_1"/>
    <property type="match status" value="1"/>
</dbReference>
<dbReference type="PROSITE" id="PS00958">
    <property type="entry name" value="TRANSALDOLASE_2"/>
    <property type="match status" value="1"/>
</dbReference>
<accession>A9L4T6</accession>
<protein>
    <recommendedName>
        <fullName evidence="2">Transaldolase</fullName>
        <ecNumber evidence="2">2.2.1.2</ecNumber>
    </recommendedName>
</protein>